<gene>
    <name evidence="1" type="primary">ruvA</name>
    <name type="ordered locus">AZC_0515</name>
</gene>
<comment type="function">
    <text evidence="1">The RuvA-RuvB-RuvC complex processes Holliday junction (HJ) DNA during genetic recombination and DNA repair, while the RuvA-RuvB complex plays an important role in the rescue of blocked DNA replication forks via replication fork reversal (RFR). RuvA specifically binds to HJ cruciform DNA, conferring on it an open structure. The RuvB hexamer acts as an ATP-dependent pump, pulling dsDNA into and through the RuvAB complex. HJ branch migration allows RuvC to scan DNA until it finds its consensus sequence, where it cleaves and resolves the cruciform DNA.</text>
</comment>
<comment type="subunit">
    <text evidence="1">Homotetramer. Forms an RuvA(8)-RuvB(12)-Holliday junction (HJ) complex. HJ DNA is sandwiched between 2 RuvA tetramers; dsDNA enters through RuvA and exits via RuvB. An RuvB hexamer assembles on each DNA strand where it exits the tetramer. Each RuvB hexamer is contacted by two RuvA subunits (via domain III) on 2 adjacent RuvB subunits; this complex drives branch migration. In the full resolvosome a probable DNA-RuvA(4)-RuvB(12)-RuvC(2) complex forms which resolves the HJ.</text>
</comment>
<comment type="subcellular location">
    <subcellularLocation>
        <location evidence="1">Cytoplasm</location>
    </subcellularLocation>
</comment>
<comment type="domain">
    <text evidence="1">Has three domains with a flexible linker between the domains II and III and assumes an 'L' shape. Domain III is highly mobile and contacts RuvB.</text>
</comment>
<comment type="similarity">
    <text evidence="1">Belongs to the RuvA family.</text>
</comment>
<proteinExistence type="inferred from homology"/>
<dbReference type="EMBL" id="AP009384">
    <property type="protein sequence ID" value="BAF86513.1"/>
    <property type="molecule type" value="Genomic_DNA"/>
</dbReference>
<dbReference type="RefSeq" id="WP_012169046.1">
    <property type="nucleotide sequence ID" value="NC_009937.1"/>
</dbReference>
<dbReference type="SMR" id="A8IM99"/>
<dbReference type="STRING" id="438753.AZC_0515"/>
<dbReference type="KEGG" id="azc:AZC_0515"/>
<dbReference type="eggNOG" id="COG0632">
    <property type="taxonomic scope" value="Bacteria"/>
</dbReference>
<dbReference type="HOGENOM" id="CLU_087936_3_0_5"/>
<dbReference type="Proteomes" id="UP000000270">
    <property type="component" value="Chromosome"/>
</dbReference>
<dbReference type="GO" id="GO:0005737">
    <property type="term" value="C:cytoplasm"/>
    <property type="evidence" value="ECO:0007669"/>
    <property type="project" value="UniProtKB-SubCell"/>
</dbReference>
<dbReference type="GO" id="GO:0009379">
    <property type="term" value="C:Holliday junction helicase complex"/>
    <property type="evidence" value="ECO:0007669"/>
    <property type="project" value="InterPro"/>
</dbReference>
<dbReference type="GO" id="GO:0048476">
    <property type="term" value="C:Holliday junction resolvase complex"/>
    <property type="evidence" value="ECO:0007669"/>
    <property type="project" value="UniProtKB-UniRule"/>
</dbReference>
<dbReference type="GO" id="GO:0005524">
    <property type="term" value="F:ATP binding"/>
    <property type="evidence" value="ECO:0007669"/>
    <property type="project" value="InterPro"/>
</dbReference>
<dbReference type="GO" id="GO:0000400">
    <property type="term" value="F:four-way junction DNA binding"/>
    <property type="evidence" value="ECO:0007669"/>
    <property type="project" value="UniProtKB-UniRule"/>
</dbReference>
<dbReference type="GO" id="GO:0009378">
    <property type="term" value="F:four-way junction helicase activity"/>
    <property type="evidence" value="ECO:0007669"/>
    <property type="project" value="InterPro"/>
</dbReference>
<dbReference type="GO" id="GO:0006310">
    <property type="term" value="P:DNA recombination"/>
    <property type="evidence" value="ECO:0007669"/>
    <property type="project" value="UniProtKB-UniRule"/>
</dbReference>
<dbReference type="GO" id="GO:0006281">
    <property type="term" value="P:DNA repair"/>
    <property type="evidence" value="ECO:0007669"/>
    <property type="project" value="UniProtKB-UniRule"/>
</dbReference>
<dbReference type="CDD" id="cd14332">
    <property type="entry name" value="UBA_RuvA_C"/>
    <property type="match status" value="1"/>
</dbReference>
<dbReference type="Gene3D" id="1.10.150.20">
    <property type="entry name" value="5' to 3' exonuclease, C-terminal subdomain"/>
    <property type="match status" value="1"/>
</dbReference>
<dbReference type="Gene3D" id="1.10.8.10">
    <property type="entry name" value="DNA helicase RuvA subunit, C-terminal domain"/>
    <property type="match status" value="1"/>
</dbReference>
<dbReference type="Gene3D" id="2.40.50.140">
    <property type="entry name" value="Nucleic acid-binding proteins"/>
    <property type="match status" value="1"/>
</dbReference>
<dbReference type="HAMAP" id="MF_00031">
    <property type="entry name" value="DNA_HJ_migration_RuvA"/>
    <property type="match status" value="1"/>
</dbReference>
<dbReference type="InterPro" id="IPR013849">
    <property type="entry name" value="DNA_helicase_Holl-junc_RuvA_I"/>
</dbReference>
<dbReference type="InterPro" id="IPR003583">
    <property type="entry name" value="Hlx-hairpin-Hlx_DNA-bd_motif"/>
</dbReference>
<dbReference type="InterPro" id="IPR012340">
    <property type="entry name" value="NA-bd_OB-fold"/>
</dbReference>
<dbReference type="InterPro" id="IPR000085">
    <property type="entry name" value="RuvA"/>
</dbReference>
<dbReference type="InterPro" id="IPR010994">
    <property type="entry name" value="RuvA_2-like"/>
</dbReference>
<dbReference type="InterPro" id="IPR011114">
    <property type="entry name" value="RuvA_C"/>
</dbReference>
<dbReference type="InterPro" id="IPR036267">
    <property type="entry name" value="RuvA_C_sf"/>
</dbReference>
<dbReference type="NCBIfam" id="TIGR00084">
    <property type="entry name" value="ruvA"/>
    <property type="match status" value="1"/>
</dbReference>
<dbReference type="Pfam" id="PF14520">
    <property type="entry name" value="HHH_5"/>
    <property type="match status" value="1"/>
</dbReference>
<dbReference type="Pfam" id="PF07499">
    <property type="entry name" value="RuvA_C"/>
    <property type="match status" value="1"/>
</dbReference>
<dbReference type="Pfam" id="PF01330">
    <property type="entry name" value="RuvA_N"/>
    <property type="match status" value="1"/>
</dbReference>
<dbReference type="SMART" id="SM00278">
    <property type="entry name" value="HhH1"/>
    <property type="match status" value="2"/>
</dbReference>
<dbReference type="SUPFAM" id="SSF46929">
    <property type="entry name" value="DNA helicase RuvA subunit, C-terminal domain"/>
    <property type="match status" value="1"/>
</dbReference>
<dbReference type="SUPFAM" id="SSF50249">
    <property type="entry name" value="Nucleic acid-binding proteins"/>
    <property type="match status" value="1"/>
</dbReference>
<dbReference type="SUPFAM" id="SSF47781">
    <property type="entry name" value="RuvA domain 2-like"/>
    <property type="match status" value="1"/>
</dbReference>
<organism>
    <name type="scientific">Azorhizobium caulinodans (strain ATCC 43989 / DSM 5975 / JCM 20966 / LMG 6465 / NBRC 14845 / NCIMB 13405 / ORS 571)</name>
    <dbReference type="NCBI Taxonomy" id="438753"/>
    <lineage>
        <taxon>Bacteria</taxon>
        <taxon>Pseudomonadati</taxon>
        <taxon>Pseudomonadota</taxon>
        <taxon>Alphaproteobacteria</taxon>
        <taxon>Hyphomicrobiales</taxon>
        <taxon>Xanthobacteraceae</taxon>
        <taxon>Azorhizobium</taxon>
    </lineage>
</organism>
<accession>A8IM99</accession>
<protein>
    <recommendedName>
        <fullName evidence="1">Holliday junction branch migration complex subunit RuvA</fullName>
    </recommendedName>
</protein>
<sequence>MIGKLKGTVDSFGEDHLILDVHGVGYLVHCSGRTLQALPRVGEAAVLFIETHVREDQIRLFGFVTEAEREWFRLLQGIQGIGTKTALAILSTLKPSDLAQAVALGDKTALARANGVGPRVATRIVTELKDKVPAFTAADPGLARLAADVEATEAAGGALADAVSALVNLGYGQAQAHTAIAAAGRKAGEDATTETLIRLGLKELAK</sequence>
<evidence type="ECO:0000255" key="1">
    <source>
        <dbReference type="HAMAP-Rule" id="MF_00031"/>
    </source>
</evidence>
<feature type="chain" id="PRO_1000071014" description="Holliday junction branch migration complex subunit RuvA">
    <location>
        <begin position="1"/>
        <end position="206"/>
    </location>
</feature>
<feature type="region of interest" description="Domain I" evidence="1">
    <location>
        <begin position="1"/>
        <end position="64"/>
    </location>
</feature>
<feature type="region of interest" description="Domain II" evidence="1">
    <location>
        <begin position="65"/>
        <end position="143"/>
    </location>
</feature>
<feature type="region of interest" description="Flexible linker" evidence="1">
    <location>
        <begin position="144"/>
        <end position="154"/>
    </location>
</feature>
<feature type="region of interest" description="Domain III" evidence="1">
    <location>
        <begin position="154"/>
        <end position="206"/>
    </location>
</feature>
<reference key="1">
    <citation type="submission" date="2007-04" db="EMBL/GenBank/DDBJ databases">
        <title>Complete genome sequence of the nitrogen-fixing bacterium Azorhizobium caulinodans ORS571.</title>
        <authorList>
            <person name="Lee K.B."/>
            <person name="Backer P.D."/>
            <person name="Aono T."/>
            <person name="Liu C.T."/>
            <person name="Suzuki S."/>
            <person name="Suzuki T."/>
            <person name="Kaneko T."/>
            <person name="Yamada M."/>
            <person name="Tabata S."/>
            <person name="Kupfer D.M."/>
            <person name="Najar F.Z."/>
            <person name="Wiley G.B."/>
            <person name="Roe B."/>
            <person name="Binnewies T."/>
            <person name="Ussery D."/>
            <person name="Vereecke D."/>
            <person name="Gevers D."/>
            <person name="Holsters M."/>
            <person name="Oyaizu H."/>
        </authorList>
    </citation>
    <scope>NUCLEOTIDE SEQUENCE [LARGE SCALE GENOMIC DNA]</scope>
    <source>
        <strain>ATCC 43989 / DSM 5975 / JCM 20966 / LMG 6465 / NBRC 14845 / NCIMB 13405 / ORS 571</strain>
    </source>
</reference>
<keyword id="KW-0963">Cytoplasm</keyword>
<keyword id="KW-0227">DNA damage</keyword>
<keyword id="KW-0233">DNA recombination</keyword>
<keyword id="KW-0234">DNA repair</keyword>
<keyword id="KW-0238">DNA-binding</keyword>
<keyword id="KW-1185">Reference proteome</keyword>
<name>RUVA_AZOC5</name>